<name>RS4_NEIMA</name>
<comment type="function">
    <text evidence="1">One of the primary rRNA binding proteins, it binds directly to 16S rRNA where it nucleates assembly of the body of the 30S subunit.</text>
</comment>
<comment type="function">
    <text evidence="1">With S5 and S12 plays an important role in translational accuracy.</text>
</comment>
<comment type="subunit">
    <text evidence="1">Part of the 30S ribosomal subunit. Contacts protein S5. The interaction surface between S4 and S5 is involved in control of translational fidelity.</text>
</comment>
<comment type="similarity">
    <text evidence="1">Belongs to the universal ribosomal protein uS4 family.</text>
</comment>
<gene>
    <name evidence="1" type="primary">rpsD</name>
    <name type="ordered locus">NMA0104</name>
</gene>
<keyword id="KW-0687">Ribonucleoprotein</keyword>
<keyword id="KW-0689">Ribosomal protein</keyword>
<keyword id="KW-0694">RNA-binding</keyword>
<keyword id="KW-0699">rRNA-binding</keyword>
<sequence length="206" mass="23250">MARYIGPKCKLARREGTDLFLKSARRSLDSKCKIDSAPGQHGAKKPRLSDYGLQLREKQKIRRIYGVLERQFRRYFAEADRRKGSTGELLLQLLESRLDNVVYRMGFGSTRAEARQLVSHKAIVVNGQVVNIPSFQVKAGDVVSVREKAKKQVRIQEALGLATQIGLPGWVSVDADKLEGVFKNMPDRSELTGDINEQLVVEFYSK</sequence>
<feature type="chain" id="PRO_0000132423" description="Small ribosomal subunit protein uS4">
    <location>
        <begin position="1"/>
        <end position="206"/>
    </location>
</feature>
<feature type="domain" description="S4 RNA-binding" evidence="1">
    <location>
        <begin position="96"/>
        <end position="157"/>
    </location>
</feature>
<reference key="1">
    <citation type="journal article" date="2000" name="Nature">
        <title>Complete DNA sequence of a serogroup A strain of Neisseria meningitidis Z2491.</title>
        <authorList>
            <person name="Parkhill J."/>
            <person name="Achtman M."/>
            <person name="James K.D."/>
            <person name="Bentley S.D."/>
            <person name="Churcher C.M."/>
            <person name="Klee S.R."/>
            <person name="Morelli G."/>
            <person name="Basham D."/>
            <person name="Brown D."/>
            <person name="Chillingworth T."/>
            <person name="Davies R.M."/>
            <person name="Davis P."/>
            <person name="Devlin K."/>
            <person name="Feltwell T."/>
            <person name="Hamlin N."/>
            <person name="Holroyd S."/>
            <person name="Jagels K."/>
            <person name="Leather S."/>
            <person name="Moule S."/>
            <person name="Mungall K.L."/>
            <person name="Quail M.A."/>
            <person name="Rajandream M.A."/>
            <person name="Rutherford K.M."/>
            <person name="Simmonds M."/>
            <person name="Skelton J."/>
            <person name="Whitehead S."/>
            <person name="Spratt B.G."/>
            <person name="Barrell B.G."/>
        </authorList>
    </citation>
    <scope>NUCLEOTIDE SEQUENCE [LARGE SCALE GENOMIC DNA]</scope>
    <source>
        <strain>DSM 15465 / Z2491</strain>
    </source>
</reference>
<accession>P66560</accession>
<accession>A1INW5</accession>
<accession>Q9JRD0</accession>
<protein>
    <recommendedName>
        <fullName evidence="1">Small ribosomal subunit protein uS4</fullName>
    </recommendedName>
    <alternativeName>
        <fullName evidence="2">30S ribosomal protein S4</fullName>
    </alternativeName>
</protein>
<dbReference type="EMBL" id="AL157959">
    <property type="protein sequence ID" value="CAM07422.1"/>
    <property type="molecule type" value="Genomic_DNA"/>
</dbReference>
<dbReference type="RefSeq" id="WP_002215455.1">
    <property type="nucleotide sequence ID" value="NC_003116.1"/>
</dbReference>
<dbReference type="SMR" id="P66560"/>
<dbReference type="EnsemblBacteria" id="CAM07422">
    <property type="protein sequence ID" value="CAM07422"/>
    <property type="gene ID" value="NMA0104"/>
</dbReference>
<dbReference type="GeneID" id="93387242"/>
<dbReference type="KEGG" id="nma:NMA0104"/>
<dbReference type="HOGENOM" id="CLU_092403_0_2_4"/>
<dbReference type="Proteomes" id="UP000000626">
    <property type="component" value="Chromosome"/>
</dbReference>
<dbReference type="GO" id="GO:0015935">
    <property type="term" value="C:small ribosomal subunit"/>
    <property type="evidence" value="ECO:0007669"/>
    <property type="project" value="InterPro"/>
</dbReference>
<dbReference type="GO" id="GO:0019843">
    <property type="term" value="F:rRNA binding"/>
    <property type="evidence" value="ECO:0007669"/>
    <property type="project" value="UniProtKB-UniRule"/>
</dbReference>
<dbReference type="GO" id="GO:0003735">
    <property type="term" value="F:structural constituent of ribosome"/>
    <property type="evidence" value="ECO:0007669"/>
    <property type="project" value="InterPro"/>
</dbReference>
<dbReference type="GO" id="GO:0042274">
    <property type="term" value="P:ribosomal small subunit biogenesis"/>
    <property type="evidence" value="ECO:0007669"/>
    <property type="project" value="TreeGrafter"/>
</dbReference>
<dbReference type="GO" id="GO:0006412">
    <property type="term" value="P:translation"/>
    <property type="evidence" value="ECO:0007669"/>
    <property type="project" value="UniProtKB-UniRule"/>
</dbReference>
<dbReference type="CDD" id="cd00165">
    <property type="entry name" value="S4"/>
    <property type="match status" value="1"/>
</dbReference>
<dbReference type="FunFam" id="1.10.1050.10:FF:000001">
    <property type="entry name" value="30S ribosomal protein S4"/>
    <property type="match status" value="1"/>
</dbReference>
<dbReference type="FunFam" id="3.10.290.10:FF:000001">
    <property type="entry name" value="30S ribosomal protein S4"/>
    <property type="match status" value="1"/>
</dbReference>
<dbReference type="Gene3D" id="1.10.1050.10">
    <property type="entry name" value="Ribosomal Protein S4 Delta 41, Chain A, domain 1"/>
    <property type="match status" value="1"/>
</dbReference>
<dbReference type="Gene3D" id="3.10.290.10">
    <property type="entry name" value="RNA-binding S4 domain"/>
    <property type="match status" value="1"/>
</dbReference>
<dbReference type="HAMAP" id="MF_01306_B">
    <property type="entry name" value="Ribosomal_uS4_B"/>
    <property type="match status" value="1"/>
</dbReference>
<dbReference type="InterPro" id="IPR022801">
    <property type="entry name" value="Ribosomal_uS4"/>
</dbReference>
<dbReference type="InterPro" id="IPR005709">
    <property type="entry name" value="Ribosomal_uS4_bac-type"/>
</dbReference>
<dbReference type="InterPro" id="IPR018079">
    <property type="entry name" value="Ribosomal_uS4_CS"/>
</dbReference>
<dbReference type="InterPro" id="IPR001912">
    <property type="entry name" value="Ribosomal_uS4_N"/>
</dbReference>
<dbReference type="InterPro" id="IPR002942">
    <property type="entry name" value="S4_RNA-bd"/>
</dbReference>
<dbReference type="InterPro" id="IPR036986">
    <property type="entry name" value="S4_RNA-bd_sf"/>
</dbReference>
<dbReference type="NCBIfam" id="NF003717">
    <property type="entry name" value="PRK05327.1"/>
    <property type="match status" value="1"/>
</dbReference>
<dbReference type="NCBIfam" id="TIGR01017">
    <property type="entry name" value="rpsD_bact"/>
    <property type="match status" value="1"/>
</dbReference>
<dbReference type="PANTHER" id="PTHR11831">
    <property type="entry name" value="30S 40S RIBOSOMAL PROTEIN"/>
    <property type="match status" value="1"/>
</dbReference>
<dbReference type="PANTHER" id="PTHR11831:SF4">
    <property type="entry name" value="SMALL RIBOSOMAL SUBUNIT PROTEIN US4M"/>
    <property type="match status" value="1"/>
</dbReference>
<dbReference type="Pfam" id="PF00163">
    <property type="entry name" value="Ribosomal_S4"/>
    <property type="match status" value="1"/>
</dbReference>
<dbReference type="Pfam" id="PF01479">
    <property type="entry name" value="S4"/>
    <property type="match status" value="1"/>
</dbReference>
<dbReference type="SMART" id="SM01390">
    <property type="entry name" value="Ribosomal_S4"/>
    <property type="match status" value="1"/>
</dbReference>
<dbReference type="SMART" id="SM00363">
    <property type="entry name" value="S4"/>
    <property type="match status" value="1"/>
</dbReference>
<dbReference type="SUPFAM" id="SSF55174">
    <property type="entry name" value="Alpha-L RNA-binding motif"/>
    <property type="match status" value="1"/>
</dbReference>
<dbReference type="PROSITE" id="PS00632">
    <property type="entry name" value="RIBOSOMAL_S4"/>
    <property type="match status" value="1"/>
</dbReference>
<dbReference type="PROSITE" id="PS50889">
    <property type="entry name" value="S4"/>
    <property type="match status" value="1"/>
</dbReference>
<evidence type="ECO:0000255" key="1">
    <source>
        <dbReference type="HAMAP-Rule" id="MF_01306"/>
    </source>
</evidence>
<evidence type="ECO:0000305" key="2"/>
<proteinExistence type="inferred from homology"/>
<organism>
    <name type="scientific">Neisseria meningitidis serogroup A / serotype 4A (strain DSM 15465 / Z2491)</name>
    <dbReference type="NCBI Taxonomy" id="122587"/>
    <lineage>
        <taxon>Bacteria</taxon>
        <taxon>Pseudomonadati</taxon>
        <taxon>Pseudomonadota</taxon>
        <taxon>Betaproteobacteria</taxon>
        <taxon>Neisseriales</taxon>
        <taxon>Neisseriaceae</taxon>
        <taxon>Neisseria</taxon>
    </lineage>
</organism>